<feature type="chain" id="PRO_1000062869" description="Transcriptional regulator MraZ">
    <location>
        <begin position="1"/>
        <end position="143"/>
    </location>
</feature>
<feature type="domain" description="SpoVT-AbrB 1" evidence="2">
    <location>
        <begin position="5"/>
        <end position="47"/>
    </location>
</feature>
<feature type="domain" description="SpoVT-AbrB 2" evidence="2">
    <location>
        <begin position="76"/>
        <end position="119"/>
    </location>
</feature>
<name>MRAZ_DESHY</name>
<reference key="1">
    <citation type="journal article" date="2006" name="J. Bacteriol.">
        <title>Complete genome sequence of the dehalorespiring bacterium Desulfitobacterium hafniense Y51 and comparison with Dehalococcoides ethenogenes 195.</title>
        <authorList>
            <person name="Nonaka H."/>
            <person name="Keresztes G."/>
            <person name="Shinoda Y."/>
            <person name="Ikenaga Y."/>
            <person name="Abe M."/>
            <person name="Naito K."/>
            <person name="Inatomi K."/>
            <person name="Furukawa K."/>
            <person name="Inui M."/>
            <person name="Yukawa H."/>
        </authorList>
    </citation>
    <scope>NUCLEOTIDE SEQUENCE [LARGE SCALE GENOMIC DNA]</scope>
    <source>
        <strain>Y51</strain>
    </source>
</reference>
<organism>
    <name type="scientific">Desulfitobacterium hafniense (strain Y51)</name>
    <dbReference type="NCBI Taxonomy" id="138119"/>
    <lineage>
        <taxon>Bacteria</taxon>
        <taxon>Bacillati</taxon>
        <taxon>Bacillota</taxon>
        <taxon>Clostridia</taxon>
        <taxon>Eubacteriales</taxon>
        <taxon>Desulfitobacteriaceae</taxon>
        <taxon>Desulfitobacterium</taxon>
    </lineage>
</organism>
<sequence>MFMGEYLHTIDGKGRLIVPARFREALGERFIATKGLDHCLFVYPLDEWKVLEEKLRALPFTQPEARAFVRFFFSGATECELDKQGRILLPANLREYAQLDKDAVLVGVSSRVEIWSQALWADYSRQAEDAYASAAESLVNLGI</sequence>
<accession>Q24TD7</accession>
<evidence type="ECO:0000255" key="1">
    <source>
        <dbReference type="HAMAP-Rule" id="MF_01008"/>
    </source>
</evidence>
<evidence type="ECO:0000255" key="2">
    <source>
        <dbReference type="PROSITE-ProRule" id="PRU01076"/>
    </source>
</evidence>
<dbReference type="EMBL" id="AP008230">
    <property type="protein sequence ID" value="BAE84705.1"/>
    <property type="molecule type" value="Genomic_DNA"/>
</dbReference>
<dbReference type="SMR" id="Q24TD7"/>
<dbReference type="STRING" id="138119.DSY2916"/>
<dbReference type="KEGG" id="dsy:DSY2916"/>
<dbReference type="eggNOG" id="COG2001">
    <property type="taxonomic scope" value="Bacteria"/>
</dbReference>
<dbReference type="HOGENOM" id="CLU_107907_0_5_9"/>
<dbReference type="Proteomes" id="UP000001946">
    <property type="component" value="Chromosome"/>
</dbReference>
<dbReference type="GO" id="GO:0005737">
    <property type="term" value="C:cytoplasm"/>
    <property type="evidence" value="ECO:0007669"/>
    <property type="project" value="UniProtKB-UniRule"/>
</dbReference>
<dbReference type="GO" id="GO:0009295">
    <property type="term" value="C:nucleoid"/>
    <property type="evidence" value="ECO:0007669"/>
    <property type="project" value="UniProtKB-SubCell"/>
</dbReference>
<dbReference type="GO" id="GO:0003700">
    <property type="term" value="F:DNA-binding transcription factor activity"/>
    <property type="evidence" value="ECO:0007669"/>
    <property type="project" value="UniProtKB-UniRule"/>
</dbReference>
<dbReference type="GO" id="GO:0000976">
    <property type="term" value="F:transcription cis-regulatory region binding"/>
    <property type="evidence" value="ECO:0007669"/>
    <property type="project" value="TreeGrafter"/>
</dbReference>
<dbReference type="GO" id="GO:2000143">
    <property type="term" value="P:negative regulation of DNA-templated transcription initiation"/>
    <property type="evidence" value="ECO:0007669"/>
    <property type="project" value="TreeGrafter"/>
</dbReference>
<dbReference type="CDD" id="cd16321">
    <property type="entry name" value="MraZ_C"/>
    <property type="match status" value="1"/>
</dbReference>
<dbReference type="CDD" id="cd16320">
    <property type="entry name" value="MraZ_N"/>
    <property type="match status" value="1"/>
</dbReference>
<dbReference type="FunFam" id="3.40.1550.20:FF:000002">
    <property type="entry name" value="Transcriptional regulator MraZ"/>
    <property type="match status" value="1"/>
</dbReference>
<dbReference type="Gene3D" id="3.40.1550.20">
    <property type="entry name" value="Transcriptional regulator MraZ domain"/>
    <property type="match status" value="1"/>
</dbReference>
<dbReference type="HAMAP" id="MF_01008">
    <property type="entry name" value="MraZ"/>
    <property type="match status" value="1"/>
</dbReference>
<dbReference type="InterPro" id="IPR003444">
    <property type="entry name" value="MraZ"/>
</dbReference>
<dbReference type="InterPro" id="IPR035644">
    <property type="entry name" value="MraZ_C"/>
</dbReference>
<dbReference type="InterPro" id="IPR020603">
    <property type="entry name" value="MraZ_dom"/>
</dbReference>
<dbReference type="InterPro" id="IPR035642">
    <property type="entry name" value="MraZ_N"/>
</dbReference>
<dbReference type="InterPro" id="IPR038619">
    <property type="entry name" value="MraZ_sf"/>
</dbReference>
<dbReference type="InterPro" id="IPR007159">
    <property type="entry name" value="SpoVT-AbrB_dom"/>
</dbReference>
<dbReference type="InterPro" id="IPR037914">
    <property type="entry name" value="SpoVT-AbrB_sf"/>
</dbReference>
<dbReference type="NCBIfam" id="TIGR00242">
    <property type="entry name" value="division/cell wall cluster transcriptional repressor MraZ"/>
    <property type="match status" value="1"/>
</dbReference>
<dbReference type="PANTHER" id="PTHR34701">
    <property type="entry name" value="TRANSCRIPTIONAL REGULATOR MRAZ"/>
    <property type="match status" value="1"/>
</dbReference>
<dbReference type="PANTHER" id="PTHR34701:SF1">
    <property type="entry name" value="TRANSCRIPTIONAL REGULATOR MRAZ"/>
    <property type="match status" value="1"/>
</dbReference>
<dbReference type="Pfam" id="PF02381">
    <property type="entry name" value="MraZ"/>
    <property type="match status" value="2"/>
</dbReference>
<dbReference type="SUPFAM" id="SSF89447">
    <property type="entry name" value="AbrB/MazE/MraZ-like"/>
    <property type="match status" value="1"/>
</dbReference>
<dbReference type="PROSITE" id="PS51740">
    <property type="entry name" value="SPOVT_ABRB"/>
    <property type="match status" value="2"/>
</dbReference>
<protein>
    <recommendedName>
        <fullName>Transcriptional regulator MraZ</fullName>
    </recommendedName>
</protein>
<comment type="subunit">
    <text evidence="1">Forms oligomers.</text>
</comment>
<comment type="subcellular location">
    <subcellularLocation>
        <location evidence="1">Cytoplasm</location>
        <location evidence="1">Nucleoid</location>
    </subcellularLocation>
</comment>
<comment type="similarity">
    <text evidence="1">Belongs to the MraZ family.</text>
</comment>
<gene>
    <name evidence="1" type="primary">mraZ</name>
    <name type="ordered locus">DSY2916</name>
</gene>
<keyword id="KW-0963">Cytoplasm</keyword>
<keyword id="KW-0238">DNA-binding</keyword>
<keyword id="KW-1185">Reference proteome</keyword>
<keyword id="KW-0677">Repeat</keyword>
<keyword id="KW-0804">Transcription</keyword>
<keyword id="KW-0805">Transcription regulation</keyword>
<proteinExistence type="inferred from homology"/>